<feature type="initiator methionine" description="Removed" evidence="12">
    <location>
        <position position="1"/>
    </location>
</feature>
<feature type="chain" id="PRO_0000121107" description="Ras-related protein Rab-5B">
    <location>
        <begin position="2"/>
        <end position="215"/>
    </location>
</feature>
<feature type="region of interest" description="Disordered" evidence="2">
    <location>
        <begin position="186"/>
        <end position="215"/>
    </location>
</feature>
<feature type="short sequence motif" description="Switch 1" evidence="1">
    <location>
        <begin position="44"/>
        <end position="56"/>
    </location>
</feature>
<feature type="short sequence motif" description="Switch 2" evidence="1">
    <location>
        <begin position="77"/>
        <end position="93"/>
    </location>
</feature>
<feature type="compositionally biased region" description="Low complexity" evidence="2">
    <location>
        <begin position="204"/>
        <end position="215"/>
    </location>
</feature>
<feature type="binding site" evidence="1">
    <location>
        <position position="29"/>
    </location>
    <ligand>
        <name>GTP</name>
        <dbReference type="ChEBI" id="CHEBI:37565"/>
    </ligand>
</feature>
<feature type="binding site" evidence="1">
    <location>
        <position position="30"/>
    </location>
    <ligand>
        <name>GTP</name>
        <dbReference type="ChEBI" id="CHEBI:37565"/>
    </ligand>
</feature>
<feature type="binding site" evidence="1">
    <location>
        <position position="32"/>
    </location>
    <ligand>
        <name>GTP</name>
        <dbReference type="ChEBI" id="CHEBI:37565"/>
    </ligand>
</feature>
<feature type="binding site" evidence="1">
    <location>
        <position position="33"/>
    </location>
    <ligand>
        <name>GTP</name>
        <dbReference type="ChEBI" id="CHEBI:37565"/>
    </ligand>
</feature>
<feature type="binding site" evidence="1">
    <location>
        <position position="34"/>
    </location>
    <ligand>
        <name>GTP</name>
        <dbReference type="ChEBI" id="CHEBI:37565"/>
    </ligand>
</feature>
<feature type="binding site" evidence="1">
    <location>
        <position position="34"/>
    </location>
    <ligand>
        <name>Mg(2+)</name>
        <dbReference type="ChEBI" id="CHEBI:18420"/>
    </ligand>
</feature>
<feature type="binding site" evidence="1">
    <location>
        <position position="35"/>
    </location>
    <ligand>
        <name>GTP</name>
        <dbReference type="ChEBI" id="CHEBI:37565"/>
    </ligand>
</feature>
<feature type="binding site" evidence="1">
    <location>
        <position position="46"/>
    </location>
    <ligand>
        <name>GTP</name>
        <dbReference type="ChEBI" id="CHEBI:37565"/>
    </ligand>
</feature>
<feature type="binding site" evidence="1">
    <location>
        <position position="47"/>
    </location>
    <ligand>
        <name>GTP</name>
        <dbReference type="ChEBI" id="CHEBI:37565"/>
    </ligand>
</feature>
<feature type="binding site" evidence="1">
    <location>
        <position position="52"/>
    </location>
    <ligand>
        <name>GTP</name>
        <dbReference type="ChEBI" id="CHEBI:37565"/>
    </ligand>
</feature>
<feature type="binding site" evidence="1">
    <location>
        <position position="52"/>
    </location>
    <ligand>
        <name>Mg(2+)</name>
        <dbReference type="ChEBI" id="CHEBI:18420"/>
    </ligand>
</feature>
<feature type="binding site" evidence="1">
    <location>
        <position position="78"/>
    </location>
    <ligand>
        <name>GTP</name>
        <dbReference type="ChEBI" id="CHEBI:37565"/>
    </ligand>
</feature>
<feature type="binding site" evidence="1">
    <location>
        <position position="133"/>
    </location>
    <ligand>
        <name>GTP</name>
        <dbReference type="ChEBI" id="CHEBI:37565"/>
    </ligand>
</feature>
<feature type="binding site" evidence="1">
    <location>
        <position position="134"/>
    </location>
    <ligand>
        <name>GTP</name>
        <dbReference type="ChEBI" id="CHEBI:37565"/>
    </ligand>
</feature>
<feature type="binding site" evidence="1">
    <location>
        <position position="136"/>
    </location>
    <ligand>
        <name>GTP</name>
        <dbReference type="ChEBI" id="CHEBI:37565"/>
    </ligand>
</feature>
<feature type="binding site" evidence="1">
    <location>
        <position position="164"/>
    </location>
    <ligand>
        <name>GTP</name>
        <dbReference type="ChEBI" id="CHEBI:37565"/>
    </ligand>
</feature>
<feature type="binding site" evidence="1">
    <location>
        <position position="165"/>
    </location>
    <ligand>
        <name>GTP</name>
        <dbReference type="ChEBI" id="CHEBI:37565"/>
    </ligand>
</feature>
<feature type="modified residue" description="N-acetylthreonine" evidence="12">
    <location>
        <position position="2"/>
    </location>
</feature>
<feature type="modified residue" description="Phosphoserine; by LRRK2" evidence="6">
    <location>
        <position position="84"/>
    </location>
</feature>
<feature type="lipid moiety-binding region" description="S-geranylgeranyl cysteine" evidence="1">
    <location>
        <position position="212"/>
    </location>
</feature>
<feature type="lipid moiety-binding region" description="S-geranylgeranyl cysteine" evidence="1">
    <location>
        <position position="213"/>
    </location>
</feature>
<feature type="splice variant" id="VSP_045301" description="In isoform 2." evidence="8">
    <location>
        <begin position="106"/>
        <end position="146"/>
    </location>
</feature>
<feature type="mutagenesis site" description="Constitutively inactivated. Strongly reduces interaction with RIN2." evidence="4">
    <original>S</original>
    <variation>N</variation>
    <location>
        <position position="34"/>
    </location>
</feature>
<feature type="mutagenesis site" description="Constitutively active." evidence="4">
    <original>Q</original>
    <variation>L</variation>
    <location>
        <position position="79"/>
    </location>
</feature>
<feature type="mutagenesis site" description="Loss of phosphorylation. No effect on GDI1, GDI2, CHML and CHM binding." evidence="6">
    <original>S</original>
    <variation>A</variation>
    <location>
        <position position="84"/>
    </location>
</feature>
<feature type="mutagenesis site" description="Phosphomimetic mutant. Loss of GDI1, GDI2, CHML and CHM binding." evidence="6">
    <original>S</original>
    <variation>E</variation>
    <location>
        <position position="84"/>
    </location>
</feature>
<feature type="strand" evidence="13">
    <location>
        <begin position="19"/>
        <end position="26"/>
    </location>
</feature>
<feature type="helix" evidence="13">
    <location>
        <begin position="33"/>
        <end position="42"/>
    </location>
</feature>
<feature type="strand" evidence="13">
    <location>
        <begin position="54"/>
        <end position="56"/>
    </location>
</feature>
<feature type="strand" evidence="13">
    <location>
        <begin position="58"/>
        <end position="62"/>
    </location>
</feature>
<feature type="strand" evidence="13">
    <location>
        <begin position="69"/>
        <end position="74"/>
    </location>
</feature>
<feature type="helix" evidence="13">
    <location>
        <begin position="83"/>
        <end position="85"/>
    </location>
</feature>
<feature type="helix" evidence="13">
    <location>
        <begin position="86"/>
        <end position="90"/>
    </location>
</feature>
<feature type="strand" evidence="13">
    <location>
        <begin position="95"/>
        <end position="101"/>
    </location>
</feature>
<feature type="helix" evidence="13">
    <location>
        <begin position="105"/>
        <end position="121"/>
    </location>
</feature>
<feature type="strand" evidence="13">
    <location>
        <begin position="127"/>
        <end position="133"/>
    </location>
</feature>
<feature type="helix" evidence="13">
    <location>
        <begin position="135"/>
        <end position="140"/>
    </location>
</feature>
<feature type="helix" evidence="13">
    <location>
        <begin position="145"/>
        <end position="154"/>
    </location>
</feature>
<feature type="strand" evidence="13">
    <location>
        <begin position="158"/>
        <end position="161"/>
    </location>
</feature>
<feature type="turn" evidence="13">
    <location>
        <begin position="164"/>
        <end position="166"/>
    </location>
</feature>
<feature type="helix" evidence="13">
    <location>
        <begin position="170"/>
        <end position="180"/>
    </location>
</feature>
<protein>
    <recommendedName>
        <fullName>Ras-related protein Rab-5B</fullName>
        <ecNumber evidence="1">3.6.5.2</ecNumber>
    </recommendedName>
</protein>
<proteinExistence type="evidence at protein level"/>
<name>RAB5B_HUMAN</name>
<keyword id="KW-0002">3D-structure</keyword>
<keyword id="KW-0007">Acetylation</keyword>
<keyword id="KW-0025">Alternative splicing</keyword>
<keyword id="KW-1003">Cell membrane</keyword>
<keyword id="KW-0967">Endosome</keyword>
<keyword id="KW-0325">Glycoprotein</keyword>
<keyword id="KW-0342">GTP-binding</keyword>
<keyword id="KW-0378">Hydrolase</keyword>
<keyword id="KW-0449">Lipoprotein</keyword>
<keyword id="KW-0460">Magnesium</keyword>
<keyword id="KW-0472">Membrane</keyword>
<keyword id="KW-0479">Metal-binding</keyword>
<keyword id="KW-0547">Nucleotide-binding</keyword>
<keyword id="KW-0597">Phosphoprotein</keyword>
<keyword id="KW-0636">Prenylation</keyword>
<keyword id="KW-0653">Protein transport</keyword>
<keyword id="KW-1267">Proteomics identification</keyword>
<keyword id="KW-1185">Reference proteome</keyword>
<keyword id="KW-0813">Transport</keyword>
<accession>P61020</accession>
<accession>A8K982</accession>
<accession>B4DKD7</accession>
<accession>P35239</accession>
<accession>P35277</accession>
<accession>Q6PIK9</accession>
<accession>Q86TH0</accession>
<accession>Q8IXL2</accession>
<reference key="1">
    <citation type="journal article" date="1992" name="J. Clin. Invest.">
        <title>Identification and subcellular localization of human rab5b, a new member of the ras-related superfamily of GTPases.</title>
        <authorList>
            <person name="Wilson D.B."/>
            <person name="Wilson M.P."/>
        </authorList>
    </citation>
    <scope>NUCLEOTIDE SEQUENCE [MRNA] (ISOFORM 1)</scope>
</reference>
<reference key="2">
    <citation type="submission" date="2002-04" db="EMBL/GenBank/DDBJ databases">
        <title>cDNA clones of human proteins involved in signal transduction sequenced by the Guthrie cDNA resource center (www.cdna.org).</title>
        <authorList>
            <person name="Puhl H.L. III"/>
            <person name="Ikeda S.R."/>
            <person name="Aronstam R.S."/>
        </authorList>
    </citation>
    <scope>NUCLEOTIDE SEQUENCE [LARGE SCALE MRNA] (ISOFORM 1)</scope>
    <source>
        <tissue>Brain</tissue>
    </source>
</reference>
<reference key="3">
    <citation type="journal article" date="2004" name="Nat. Genet.">
        <title>Complete sequencing and characterization of 21,243 full-length human cDNAs.</title>
        <authorList>
            <person name="Ota T."/>
            <person name="Suzuki Y."/>
            <person name="Nishikawa T."/>
            <person name="Otsuki T."/>
            <person name="Sugiyama T."/>
            <person name="Irie R."/>
            <person name="Wakamatsu A."/>
            <person name="Hayashi K."/>
            <person name="Sato H."/>
            <person name="Nagai K."/>
            <person name="Kimura K."/>
            <person name="Makita H."/>
            <person name="Sekine M."/>
            <person name="Obayashi M."/>
            <person name="Nishi T."/>
            <person name="Shibahara T."/>
            <person name="Tanaka T."/>
            <person name="Ishii S."/>
            <person name="Yamamoto J."/>
            <person name="Saito K."/>
            <person name="Kawai Y."/>
            <person name="Isono Y."/>
            <person name="Nakamura Y."/>
            <person name="Nagahari K."/>
            <person name="Murakami K."/>
            <person name="Yasuda T."/>
            <person name="Iwayanagi T."/>
            <person name="Wagatsuma M."/>
            <person name="Shiratori A."/>
            <person name="Sudo H."/>
            <person name="Hosoiri T."/>
            <person name="Kaku Y."/>
            <person name="Kodaira H."/>
            <person name="Kondo H."/>
            <person name="Sugawara M."/>
            <person name="Takahashi M."/>
            <person name="Kanda K."/>
            <person name="Yokoi T."/>
            <person name="Furuya T."/>
            <person name="Kikkawa E."/>
            <person name="Omura Y."/>
            <person name="Abe K."/>
            <person name="Kamihara K."/>
            <person name="Katsuta N."/>
            <person name="Sato K."/>
            <person name="Tanikawa M."/>
            <person name="Yamazaki M."/>
            <person name="Ninomiya K."/>
            <person name="Ishibashi T."/>
            <person name="Yamashita H."/>
            <person name="Murakawa K."/>
            <person name="Fujimori K."/>
            <person name="Tanai H."/>
            <person name="Kimata M."/>
            <person name="Watanabe M."/>
            <person name="Hiraoka S."/>
            <person name="Chiba Y."/>
            <person name="Ishida S."/>
            <person name="Ono Y."/>
            <person name="Takiguchi S."/>
            <person name="Watanabe S."/>
            <person name="Yosida M."/>
            <person name="Hotuta T."/>
            <person name="Kusano J."/>
            <person name="Kanehori K."/>
            <person name="Takahashi-Fujii A."/>
            <person name="Hara H."/>
            <person name="Tanase T.-O."/>
            <person name="Nomura Y."/>
            <person name="Togiya S."/>
            <person name="Komai F."/>
            <person name="Hara R."/>
            <person name="Takeuchi K."/>
            <person name="Arita M."/>
            <person name="Imose N."/>
            <person name="Musashino K."/>
            <person name="Yuuki H."/>
            <person name="Oshima A."/>
            <person name="Sasaki N."/>
            <person name="Aotsuka S."/>
            <person name="Yoshikawa Y."/>
            <person name="Matsunawa H."/>
            <person name="Ichihara T."/>
            <person name="Shiohata N."/>
            <person name="Sano S."/>
            <person name="Moriya S."/>
            <person name="Momiyama H."/>
            <person name="Satoh N."/>
            <person name="Takami S."/>
            <person name="Terashima Y."/>
            <person name="Suzuki O."/>
            <person name="Nakagawa S."/>
            <person name="Senoh A."/>
            <person name="Mizoguchi H."/>
            <person name="Goto Y."/>
            <person name="Shimizu F."/>
            <person name="Wakebe H."/>
            <person name="Hishigaki H."/>
            <person name="Watanabe T."/>
            <person name="Sugiyama A."/>
            <person name="Takemoto M."/>
            <person name="Kawakami B."/>
            <person name="Yamazaki M."/>
            <person name="Watanabe K."/>
            <person name="Kumagai A."/>
            <person name="Itakura S."/>
            <person name="Fukuzumi Y."/>
            <person name="Fujimori Y."/>
            <person name="Komiyama M."/>
            <person name="Tashiro H."/>
            <person name="Tanigami A."/>
            <person name="Fujiwara T."/>
            <person name="Ono T."/>
            <person name="Yamada K."/>
            <person name="Fujii Y."/>
            <person name="Ozaki K."/>
            <person name="Hirao M."/>
            <person name="Ohmori Y."/>
            <person name="Kawabata A."/>
            <person name="Hikiji T."/>
            <person name="Kobatake N."/>
            <person name="Inagaki H."/>
            <person name="Ikema Y."/>
            <person name="Okamoto S."/>
            <person name="Okitani R."/>
            <person name="Kawakami T."/>
            <person name="Noguchi S."/>
            <person name="Itoh T."/>
            <person name="Shigeta K."/>
            <person name="Senba T."/>
            <person name="Matsumura K."/>
            <person name="Nakajima Y."/>
            <person name="Mizuno T."/>
            <person name="Morinaga M."/>
            <person name="Sasaki M."/>
            <person name="Togashi T."/>
            <person name="Oyama M."/>
            <person name="Hata H."/>
            <person name="Watanabe M."/>
            <person name="Komatsu T."/>
            <person name="Mizushima-Sugano J."/>
            <person name="Satoh T."/>
            <person name="Shirai Y."/>
            <person name="Takahashi Y."/>
            <person name="Nakagawa K."/>
            <person name="Okumura K."/>
            <person name="Nagase T."/>
            <person name="Nomura N."/>
            <person name="Kikuchi H."/>
            <person name="Masuho Y."/>
            <person name="Yamashita R."/>
            <person name="Nakai K."/>
            <person name="Yada T."/>
            <person name="Nakamura Y."/>
            <person name="Ohara O."/>
            <person name="Isogai T."/>
            <person name="Sugano S."/>
        </authorList>
    </citation>
    <scope>NUCLEOTIDE SEQUENCE [LARGE SCALE MRNA] (ISOFORMS 1 AND 2)</scope>
    <source>
        <tissue>Testis</tissue>
        <tissue>Thalamus</tissue>
    </source>
</reference>
<reference key="4">
    <citation type="journal article" date="2007" name="BMC Genomics">
        <title>The full-ORF clone resource of the German cDNA consortium.</title>
        <authorList>
            <person name="Bechtel S."/>
            <person name="Rosenfelder H."/>
            <person name="Duda A."/>
            <person name="Schmidt C.P."/>
            <person name="Ernst U."/>
            <person name="Wellenreuther R."/>
            <person name="Mehrle A."/>
            <person name="Schuster C."/>
            <person name="Bahr A."/>
            <person name="Bloecker H."/>
            <person name="Heubner D."/>
            <person name="Hoerlein A."/>
            <person name="Michel G."/>
            <person name="Wedler H."/>
            <person name="Koehrer K."/>
            <person name="Ottenwaelder B."/>
            <person name="Poustka A."/>
            <person name="Wiemann S."/>
            <person name="Schupp I."/>
        </authorList>
    </citation>
    <scope>NUCLEOTIDE SEQUENCE [LARGE SCALE MRNA] (ISOFORM 1)</scope>
    <source>
        <tissue>Endometrium</tissue>
    </source>
</reference>
<reference key="5">
    <citation type="journal article" date="2006" name="Nature">
        <title>The finished DNA sequence of human chromosome 12.</title>
        <authorList>
            <person name="Scherer S.E."/>
            <person name="Muzny D.M."/>
            <person name="Buhay C.J."/>
            <person name="Chen R."/>
            <person name="Cree A."/>
            <person name="Ding Y."/>
            <person name="Dugan-Rocha S."/>
            <person name="Gill R."/>
            <person name="Gunaratne P."/>
            <person name="Harris R.A."/>
            <person name="Hawes A.C."/>
            <person name="Hernandez J."/>
            <person name="Hodgson A.V."/>
            <person name="Hume J."/>
            <person name="Jackson A."/>
            <person name="Khan Z.M."/>
            <person name="Kovar-Smith C."/>
            <person name="Lewis L.R."/>
            <person name="Lozado R.J."/>
            <person name="Metzker M.L."/>
            <person name="Milosavljevic A."/>
            <person name="Miner G.R."/>
            <person name="Montgomery K.T."/>
            <person name="Morgan M.B."/>
            <person name="Nazareth L.V."/>
            <person name="Scott G."/>
            <person name="Sodergren E."/>
            <person name="Song X.-Z."/>
            <person name="Steffen D."/>
            <person name="Lovering R.C."/>
            <person name="Wheeler D.A."/>
            <person name="Worley K.C."/>
            <person name="Yuan Y."/>
            <person name="Zhang Z."/>
            <person name="Adams C.Q."/>
            <person name="Ansari-Lari M.A."/>
            <person name="Ayele M."/>
            <person name="Brown M.J."/>
            <person name="Chen G."/>
            <person name="Chen Z."/>
            <person name="Clerc-Blankenburg K.P."/>
            <person name="Davis C."/>
            <person name="Delgado O."/>
            <person name="Dinh H.H."/>
            <person name="Draper H."/>
            <person name="Gonzalez-Garay M.L."/>
            <person name="Havlak P."/>
            <person name="Jackson L.R."/>
            <person name="Jacob L.S."/>
            <person name="Kelly S.H."/>
            <person name="Li L."/>
            <person name="Li Z."/>
            <person name="Liu J."/>
            <person name="Liu W."/>
            <person name="Lu J."/>
            <person name="Maheshwari M."/>
            <person name="Nguyen B.-V."/>
            <person name="Okwuonu G.O."/>
            <person name="Pasternak S."/>
            <person name="Perez L.M."/>
            <person name="Plopper F.J.H."/>
            <person name="Santibanez J."/>
            <person name="Shen H."/>
            <person name="Tabor P.E."/>
            <person name="Verduzco D."/>
            <person name="Waldron L."/>
            <person name="Wang Q."/>
            <person name="Williams G.A."/>
            <person name="Zhang J."/>
            <person name="Zhou J."/>
            <person name="Allen C.C."/>
            <person name="Amin A.G."/>
            <person name="Anyalebechi V."/>
            <person name="Bailey M."/>
            <person name="Barbaria J.A."/>
            <person name="Bimage K.E."/>
            <person name="Bryant N.P."/>
            <person name="Burch P.E."/>
            <person name="Burkett C.E."/>
            <person name="Burrell K.L."/>
            <person name="Calderon E."/>
            <person name="Cardenas V."/>
            <person name="Carter K."/>
            <person name="Casias K."/>
            <person name="Cavazos I."/>
            <person name="Cavazos S.R."/>
            <person name="Ceasar H."/>
            <person name="Chacko J."/>
            <person name="Chan S.N."/>
            <person name="Chavez D."/>
            <person name="Christopoulos C."/>
            <person name="Chu J."/>
            <person name="Cockrell R."/>
            <person name="Cox C.D."/>
            <person name="Dang M."/>
            <person name="Dathorne S.R."/>
            <person name="David R."/>
            <person name="Davis C.M."/>
            <person name="Davy-Carroll L."/>
            <person name="Deshazo D.R."/>
            <person name="Donlin J.E."/>
            <person name="D'Souza L."/>
            <person name="Eaves K.A."/>
            <person name="Egan A."/>
            <person name="Emery-Cohen A.J."/>
            <person name="Escotto M."/>
            <person name="Flagg N."/>
            <person name="Forbes L.D."/>
            <person name="Gabisi A.M."/>
            <person name="Garza M."/>
            <person name="Hamilton C."/>
            <person name="Henderson N."/>
            <person name="Hernandez O."/>
            <person name="Hines S."/>
            <person name="Hogues M.E."/>
            <person name="Huang M."/>
            <person name="Idlebird D.G."/>
            <person name="Johnson R."/>
            <person name="Jolivet A."/>
            <person name="Jones S."/>
            <person name="Kagan R."/>
            <person name="King L.M."/>
            <person name="Leal B."/>
            <person name="Lebow H."/>
            <person name="Lee S."/>
            <person name="LeVan J.M."/>
            <person name="Lewis L.C."/>
            <person name="London P."/>
            <person name="Lorensuhewa L.M."/>
            <person name="Loulseged H."/>
            <person name="Lovett D.A."/>
            <person name="Lucier A."/>
            <person name="Lucier R.L."/>
            <person name="Ma J."/>
            <person name="Madu R.C."/>
            <person name="Mapua P."/>
            <person name="Martindale A.D."/>
            <person name="Martinez E."/>
            <person name="Massey E."/>
            <person name="Mawhiney S."/>
            <person name="Meador M.G."/>
            <person name="Mendez S."/>
            <person name="Mercado C."/>
            <person name="Mercado I.C."/>
            <person name="Merritt C.E."/>
            <person name="Miner Z.L."/>
            <person name="Minja E."/>
            <person name="Mitchell T."/>
            <person name="Mohabbat F."/>
            <person name="Mohabbat K."/>
            <person name="Montgomery B."/>
            <person name="Moore N."/>
            <person name="Morris S."/>
            <person name="Munidasa M."/>
            <person name="Ngo R.N."/>
            <person name="Nguyen N.B."/>
            <person name="Nickerson E."/>
            <person name="Nwaokelemeh O.O."/>
            <person name="Nwokenkwo S."/>
            <person name="Obregon M."/>
            <person name="Oguh M."/>
            <person name="Oragunye N."/>
            <person name="Oviedo R.J."/>
            <person name="Parish B.J."/>
            <person name="Parker D.N."/>
            <person name="Parrish J."/>
            <person name="Parks K.L."/>
            <person name="Paul H.A."/>
            <person name="Payton B.A."/>
            <person name="Perez A."/>
            <person name="Perrin W."/>
            <person name="Pickens A."/>
            <person name="Primus E.L."/>
            <person name="Pu L.-L."/>
            <person name="Puazo M."/>
            <person name="Quiles M.M."/>
            <person name="Quiroz J.B."/>
            <person name="Rabata D."/>
            <person name="Reeves K."/>
            <person name="Ruiz S.J."/>
            <person name="Shao H."/>
            <person name="Sisson I."/>
            <person name="Sonaike T."/>
            <person name="Sorelle R.P."/>
            <person name="Sutton A.E."/>
            <person name="Svatek A.F."/>
            <person name="Svetz L.A."/>
            <person name="Tamerisa K.S."/>
            <person name="Taylor T.R."/>
            <person name="Teague B."/>
            <person name="Thomas N."/>
            <person name="Thorn R.D."/>
            <person name="Trejos Z.Y."/>
            <person name="Trevino B.K."/>
            <person name="Ukegbu O.N."/>
            <person name="Urban J.B."/>
            <person name="Vasquez L.I."/>
            <person name="Vera V.A."/>
            <person name="Villasana D.M."/>
            <person name="Wang L."/>
            <person name="Ward-Moore S."/>
            <person name="Warren J.T."/>
            <person name="Wei X."/>
            <person name="White F."/>
            <person name="Williamson A.L."/>
            <person name="Wleczyk R."/>
            <person name="Wooden H.S."/>
            <person name="Wooden S.H."/>
            <person name="Yen J."/>
            <person name="Yoon L."/>
            <person name="Yoon V."/>
            <person name="Zorrilla S.E."/>
            <person name="Nelson D."/>
            <person name="Kucherlapati R."/>
            <person name="Weinstock G."/>
            <person name="Gibbs R.A."/>
        </authorList>
    </citation>
    <scope>NUCLEOTIDE SEQUENCE [LARGE SCALE GENOMIC DNA]</scope>
</reference>
<reference key="6">
    <citation type="submission" date="2005-07" db="EMBL/GenBank/DDBJ databases">
        <authorList>
            <person name="Mural R.J."/>
            <person name="Istrail S."/>
            <person name="Sutton G.G."/>
            <person name="Florea L."/>
            <person name="Halpern A.L."/>
            <person name="Mobarry C.M."/>
            <person name="Lippert R."/>
            <person name="Walenz B."/>
            <person name="Shatkay H."/>
            <person name="Dew I."/>
            <person name="Miller J.R."/>
            <person name="Flanigan M.J."/>
            <person name="Edwards N.J."/>
            <person name="Bolanos R."/>
            <person name="Fasulo D."/>
            <person name="Halldorsson B.V."/>
            <person name="Hannenhalli S."/>
            <person name="Turner R."/>
            <person name="Yooseph S."/>
            <person name="Lu F."/>
            <person name="Nusskern D.R."/>
            <person name="Shue B.C."/>
            <person name="Zheng X.H."/>
            <person name="Zhong F."/>
            <person name="Delcher A.L."/>
            <person name="Huson D.H."/>
            <person name="Kravitz S.A."/>
            <person name="Mouchard L."/>
            <person name="Reinert K."/>
            <person name="Remington K.A."/>
            <person name="Clark A.G."/>
            <person name="Waterman M.S."/>
            <person name="Eichler E.E."/>
            <person name="Adams M.D."/>
            <person name="Hunkapiller M.W."/>
            <person name="Myers E.W."/>
            <person name="Venter J.C."/>
        </authorList>
    </citation>
    <scope>NUCLEOTIDE SEQUENCE [LARGE SCALE GENOMIC DNA]</scope>
</reference>
<reference key="7">
    <citation type="journal article" date="2004" name="Genome Res.">
        <title>The status, quality, and expansion of the NIH full-length cDNA project: the Mammalian Gene Collection (MGC).</title>
        <authorList>
            <consortium name="The MGC Project Team"/>
        </authorList>
    </citation>
    <scope>NUCLEOTIDE SEQUENCE [LARGE SCALE MRNA] (ISOFORM 1)</scope>
    <source>
        <tissue>Eye</tissue>
        <tissue>PNS</tissue>
        <tissue>Skin</tissue>
    </source>
</reference>
<reference key="8">
    <citation type="journal article" date="1999" name="Eur. J. Biochem.">
        <title>Direct interaction of EEA1 with Rab5b.</title>
        <authorList>
            <person name="Callaghan J.M."/>
            <person name="Nixon S."/>
            <person name="Bucci C."/>
            <person name="Toh B.-H."/>
            <person name="Stenmark H."/>
        </authorList>
    </citation>
    <scope>INTERACTION WITH EEA1</scope>
</reference>
<reference key="9">
    <citation type="journal article" date="2002" name="J. Biol. Chem.">
        <title>A novel binding protein composed of homophilic tetramer exhibits unique properties for the small GTPase Rab5.</title>
        <authorList>
            <person name="Saito K."/>
            <person name="Murai J."/>
            <person name="Kajiho H."/>
            <person name="Kontani K."/>
            <person name="Kurosu H."/>
            <person name="Katada T."/>
        </authorList>
    </citation>
    <scope>INTERACTION WITH RIN2 AND RIN3</scope>
    <scope>MUTAGENESIS OF SER-34 AND GLN-79</scope>
</reference>
<reference key="10">
    <citation type="journal article" date="2006" name="J. Proteome Res.">
        <title>Proteomic and bioinformatic characterization of the biogenesis and function of melanosomes.</title>
        <authorList>
            <person name="Chi A."/>
            <person name="Valencia J.C."/>
            <person name="Hu Z.-Z."/>
            <person name="Watabe H."/>
            <person name="Yamaguchi H."/>
            <person name="Mangini N.J."/>
            <person name="Huang H."/>
            <person name="Canfield V.A."/>
            <person name="Cheng K.C."/>
            <person name="Yang F."/>
            <person name="Abe R."/>
            <person name="Yamagishi S."/>
            <person name="Shabanowitz J."/>
            <person name="Hearing V.J."/>
            <person name="Wu C."/>
            <person name="Appella E."/>
            <person name="Hunt D.F."/>
        </authorList>
    </citation>
    <scope>SUBCELLULAR LOCATION [LARGE SCALE ANALYSIS]</scope>
    <source>
        <tissue>Melanoma</tissue>
    </source>
</reference>
<reference key="11">
    <citation type="journal article" date="2009" name="Anal. Chem.">
        <title>Lys-N and trypsin cover complementary parts of the phosphoproteome in a refined SCX-based approach.</title>
        <authorList>
            <person name="Gauci S."/>
            <person name="Helbig A.O."/>
            <person name="Slijper M."/>
            <person name="Krijgsveld J."/>
            <person name="Heck A.J."/>
            <person name="Mohammed S."/>
        </authorList>
    </citation>
    <scope>ACETYLATION [LARGE SCALE ANALYSIS] AT THR-2</scope>
    <scope>CLEAVAGE OF INITIATOR METHIONINE [LARGE SCALE ANALYSIS]</scope>
    <scope>IDENTIFICATION BY MASS SPECTROMETRY [LARGE SCALE ANALYSIS]</scope>
</reference>
<reference key="12">
    <citation type="journal article" date="2011" name="BMC Syst. Biol.">
        <title>Initial characterization of the human central proteome.</title>
        <authorList>
            <person name="Burkard T.R."/>
            <person name="Planyavsky M."/>
            <person name="Kaupe I."/>
            <person name="Breitwieser F.P."/>
            <person name="Buerckstuemmer T."/>
            <person name="Bennett K.L."/>
            <person name="Superti-Furga G."/>
            <person name="Colinge J."/>
        </authorList>
    </citation>
    <scope>IDENTIFICATION BY MASS SPECTROMETRY [LARGE SCALE ANALYSIS]</scope>
</reference>
<reference key="13">
    <citation type="journal article" date="2015" name="Proteomics">
        <title>N-terminome analysis of the human mitochondrial proteome.</title>
        <authorList>
            <person name="Vaca Jacome A.S."/>
            <person name="Rabilloud T."/>
            <person name="Schaeffer-Reiss C."/>
            <person name="Rompais M."/>
            <person name="Ayoub D."/>
            <person name="Lane L."/>
            <person name="Bairoch A."/>
            <person name="Van Dorsselaer A."/>
            <person name="Carapito C."/>
        </authorList>
    </citation>
    <scope>IDENTIFICATION BY MASS SPECTROMETRY [LARGE SCALE ANALYSIS]</scope>
</reference>
<reference key="14">
    <citation type="journal article" date="2017" name="Elife">
        <title>Systematic proteomic analysis of LRRK2-mediated Rab GTPase phosphorylation establishes a connection to ciliogenesis.</title>
        <authorList>
            <person name="Steger M."/>
            <person name="Diez F."/>
            <person name="Dhekne H.S."/>
            <person name="Lis P."/>
            <person name="Nirujogi R.S."/>
            <person name="Karayel O."/>
            <person name="Tonelli F."/>
            <person name="Martinez T.N."/>
            <person name="Lorentzen E."/>
            <person name="Pfeffer S.R."/>
            <person name="Alessi D.R."/>
            <person name="Mann M."/>
        </authorList>
    </citation>
    <scope>INTERACTION WITH GDI1; GDI2; CHML AND CHM</scope>
    <scope>PHOSPHORYLATION AT SER-84</scope>
    <scope>MUTAGENESIS OF SER-84</scope>
</reference>
<reference key="15">
    <citation type="journal article" date="2020" name="Front. Cell. Infect. Microbiol.">
        <title>The Salmonella effector SseK3 targets small Rab GTPases.</title>
        <authorList>
            <person name="Gan J."/>
            <person name="Scott N.E."/>
            <person name="Newson J.P.M."/>
            <person name="Wibawa R.R."/>
            <person name="Wong Fok Lung T."/>
            <person name="Pollock G.L."/>
            <person name="Ng G.Z."/>
            <person name="van Driel I."/>
            <person name="Pearson J.S."/>
            <person name="Hartland E.L."/>
            <person name="Giogha C."/>
        </authorList>
    </citation>
    <scope>GLYCOSYLATION (MICROBIAL INFECTION)</scope>
</reference>
<reference evidence="11" key="16">
    <citation type="submission" date="2009-02" db="PDB data bank">
        <title>Crystal structure of human RAB5B in complex with GDP.</title>
        <authorList>
            <consortium name="Structural genomics consortium (SGC)"/>
        </authorList>
    </citation>
    <scope>X-RAY CRYSTALLOGRAPHY (1.55 ANGSTROMS) OF 15-191 IN COMPLEX WITH GDP</scope>
</reference>
<comment type="function">
    <text evidence="1">The small GTPases Rab are key regulators of intracellular membrane trafficking, from the formation of transport vesicles to their fusion with membranes. Rabs cycle between an inactive GDP-bound form and an active GTP-bound form that is able to recruit to membranes different sets of downstream effectors directly responsible for vesicle formation, movement, tethering and fusion.</text>
</comment>
<comment type="catalytic activity">
    <reaction evidence="1">
        <text>GTP + H2O = GDP + phosphate + H(+)</text>
        <dbReference type="Rhea" id="RHEA:19669"/>
        <dbReference type="ChEBI" id="CHEBI:15377"/>
        <dbReference type="ChEBI" id="CHEBI:15378"/>
        <dbReference type="ChEBI" id="CHEBI:37565"/>
        <dbReference type="ChEBI" id="CHEBI:43474"/>
        <dbReference type="ChEBI" id="CHEBI:58189"/>
        <dbReference type="EC" id="3.6.5.2"/>
    </reaction>
    <physiologicalReaction direction="left-to-right" evidence="1">
        <dbReference type="Rhea" id="RHEA:19670"/>
    </physiologicalReaction>
</comment>
<comment type="cofactor">
    <cofactor evidence="1">
        <name>Mg(2+)</name>
        <dbReference type="ChEBI" id="CHEBI:18420"/>
    </cofactor>
</comment>
<comment type="activity regulation">
    <text evidence="9">Regulated by guanine nucleotide exchange factors (GEFs) which promote the exchange of bound GDP for free GTP (Probable). Regulated by GTPase activating proteins (GAPs) which increase the GTP hydrolysis activity (Probable). Inhibited by GDP dissociation inhibitors (GDIs) (Probable).</text>
</comment>
<comment type="subunit">
    <text evidence="3 4 6">Binds EEA1 (PubMed:10491193). Interacts with RIN2 and RIN3, which probably regulate its pathway, possibly by acting as GEFs (PubMed:11733506). Interacts with GDI1, GDI2, CHML and CHM; phosphorylation at Ser-84 disrupts this interaction (PubMed:29125462).</text>
</comment>
<comment type="interaction">
    <interactant intactId="EBI-399401">
        <id>P61020</id>
    </interactant>
    <interactant intactId="EBI-298113">
        <id>Q15075</id>
        <label>EEA1</label>
    </interactant>
    <organismsDiffer>false</organismsDiffer>
    <experiments>3</experiments>
</comment>
<comment type="interaction">
    <interactant intactId="EBI-399401">
        <id>P61020</id>
    </interactant>
    <interactant intactId="EBI-742137">
        <id>Q8N612</id>
        <label>FHIP1B</label>
    </interactant>
    <organismsDiffer>false</organismsDiffer>
    <experiments>4</experiments>
</comment>
<comment type="interaction">
    <interactant intactId="EBI-399401">
        <id>P61020</id>
    </interactant>
    <interactant intactId="EBI-466029">
        <id>P42858</id>
        <label>HTT</label>
    </interactant>
    <organismsDiffer>false</organismsDiffer>
    <experiments>3</experiments>
</comment>
<comment type="interaction">
    <interactant intactId="EBI-399401">
        <id>P61020</id>
    </interactant>
    <interactant intactId="EBI-5323863">
        <id>Q5S007</id>
        <label>LRRK2</label>
    </interactant>
    <organismsDiffer>false</organismsDiffer>
    <experiments>9</experiments>
</comment>
<comment type="subcellular location">
    <subcellularLocation>
        <location evidence="5">Cell membrane</location>
        <topology evidence="5">Lipid-anchor</topology>
        <orientation evidence="5">Cytoplasmic side</orientation>
    </subcellularLocation>
    <subcellularLocation>
        <location evidence="5">Early endosome membrane</location>
        <topology evidence="5">Lipid-anchor</topology>
    </subcellularLocation>
    <subcellularLocation>
        <location evidence="5">Melanosome</location>
    </subcellularLocation>
    <text evidence="5">Enriched in stage I melanosomes.</text>
</comment>
<comment type="alternative products">
    <event type="alternative splicing"/>
    <isoform>
        <id>P61020-1</id>
        <name>1</name>
        <sequence type="displayed"/>
    </isoform>
    <isoform>
        <id>P61020-2</id>
        <name>2</name>
        <sequence type="described" ref="VSP_045301"/>
    </isoform>
</comment>
<comment type="domain">
    <text evidence="1">Switch 1, switch 2 and the interswitch regions are characteristic of Rab GTPases and mediate the interactions with Rab downstream effectors. The switch regions undergo conformational changes upon nucleotide binding which drive interaction with specific sets of effector proteins, with most effectors only binding to GTP-bound Rab.</text>
</comment>
<comment type="PTM">
    <text evidence="6">Phosphorylation of Ser-84 in the switch II region by LRRK2 prevents the association of RAB regulatory proteins, including CHM, CHML and RAB GDP dissociation inhibitors GDI1 and GDI2.</text>
</comment>
<comment type="PTM">
    <text evidence="7">(Microbial infection) Glycosylated on arginine residues by S.typhimurium protein Ssek3.</text>
</comment>
<comment type="similarity">
    <text evidence="9">Belongs to the small GTPase superfamily. Rab family.</text>
</comment>
<comment type="sequence caution" evidence="9">
    <conflict type="erroneous initiation">
        <sequence resource="EMBL-CDS" id="AAH40143"/>
    </conflict>
</comment>
<organism>
    <name type="scientific">Homo sapiens</name>
    <name type="common">Human</name>
    <dbReference type="NCBI Taxonomy" id="9606"/>
    <lineage>
        <taxon>Eukaryota</taxon>
        <taxon>Metazoa</taxon>
        <taxon>Chordata</taxon>
        <taxon>Craniata</taxon>
        <taxon>Vertebrata</taxon>
        <taxon>Euteleostomi</taxon>
        <taxon>Mammalia</taxon>
        <taxon>Eutheria</taxon>
        <taxon>Euarchontoglires</taxon>
        <taxon>Primates</taxon>
        <taxon>Haplorrhini</taxon>
        <taxon>Catarrhini</taxon>
        <taxon>Hominidae</taxon>
        <taxon>Homo</taxon>
    </lineage>
</organism>
<dbReference type="EC" id="3.6.5.2" evidence="1"/>
<dbReference type="EMBL" id="X54871">
    <property type="protein sequence ID" value="CAA38653.1"/>
    <property type="molecule type" value="mRNA"/>
</dbReference>
<dbReference type="EMBL" id="AF498937">
    <property type="protein sequence ID" value="AAM21085.1"/>
    <property type="molecule type" value="mRNA"/>
</dbReference>
<dbReference type="EMBL" id="AK292597">
    <property type="protein sequence ID" value="BAF85286.1"/>
    <property type="molecule type" value="mRNA"/>
</dbReference>
<dbReference type="EMBL" id="AK296517">
    <property type="protein sequence ID" value="BAG59149.1"/>
    <property type="molecule type" value="mRNA"/>
</dbReference>
<dbReference type="EMBL" id="BX537408">
    <property type="protein sequence ID" value="CAD97650.1"/>
    <property type="molecule type" value="mRNA"/>
</dbReference>
<dbReference type="EMBL" id="AC034102">
    <property type="status" value="NOT_ANNOTATED_CDS"/>
    <property type="molecule type" value="Genomic_DNA"/>
</dbReference>
<dbReference type="EMBL" id="CH471054">
    <property type="protein sequence ID" value="EAW96862.1"/>
    <property type="molecule type" value="Genomic_DNA"/>
</dbReference>
<dbReference type="EMBL" id="CH471054">
    <property type="protein sequence ID" value="EAW96864.1"/>
    <property type="molecule type" value="Genomic_DNA"/>
</dbReference>
<dbReference type="EMBL" id="BC032740">
    <property type="protein sequence ID" value="AAH32740.1"/>
    <property type="molecule type" value="mRNA"/>
</dbReference>
<dbReference type="EMBL" id="BC040143">
    <property type="protein sequence ID" value="AAH40143.1"/>
    <property type="status" value="ALT_INIT"/>
    <property type="molecule type" value="mRNA"/>
</dbReference>
<dbReference type="EMBL" id="BC050558">
    <property type="protein sequence ID" value="AAH50558.2"/>
    <property type="molecule type" value="mRNA"/>
</dbReference>
<dbReference type="EMBL" id="BC056422">
    <property type="protein sequence ID" value="AAH56422.2"/>
    <property type="molecule type" value="mRNA"/>
</dbReference>
<dbReference type="EMBL" id="BC065298">
    <property type="protein sequence ID" value="AAH65298.2"/>
    <property type="molecule type" value="mRNA"/>
</dbReference>
<dbReference type="CCDS" id="CCDS58244.1">
    <molecule id="P61020-2"/>
</dbReference>
<dbReference type="CCDS" id="CCDS8900.1">
    <molecule id="P61020-1"/>
</dbReference>
<dbReference type="PIR" id="A43925">
    <property type="entry name" value="A43925"/>
</dbReference>
<dbReference type="RefSeq" id="NP_001238965.1">
    <molecule id="P61020-1"/>
    <property type="nucleotide sequence ID" value="NM_001252036.2"/>
</dbReference>
<dbReference type="RefSeq" id="NP_001238966.1">
    <molecule id="P61020-2"/>
    <property type="nucleotide sequence ID" value="NM_001252037.2"/>
</dbReference>
<dbReference type="RefSeq" id="NP_001401386.1">
    <molecule id="P61020-1"/>
    <property type="nucleotide sequence ID" value="NM_001414457.1"/>
</dbReference>
<dbReference type="RefSeq" id="NP_002859.1">
    <molecule id="P61020-1"/>
    <property type="nucleotide sequence ID" value="NM_002868.4"/>
</dbReference>
<dbReference type="RefSeq" id="XP_005269108.1">
    <property type="nucleotide sequence ID" value="XM_005269051.2"/>
</dbReference>
<dbReference type="RefSeq" id="XP_005269109.1">
    <property type="nucleotide sequence ID" value="XM_005269052.2"/>
</dbReference>
<dbReference type="PDB" id="2HEI">
    <property type="method" value="X-ray"/>
    <property type="resolution" value="1.55 A"/>
    <property type="chains" value="A/B=15-191"/>
</dbReference>
<dbReference type="PDBsum" id="2HEI"/>
<dbReference type="SMR" id="P61020"/>
<dbReference type="BioGRID" id="111807">
    <property type="interactions" value="150"/>
</dbReference>
<dbReference type="FunCoup" id="P61020">
    <property type="interactions" value="3796"/>
</dbReference>
<dbReference type="IntAct" id="P61020">
    <property type="interactions" value="62"/>
</dbReference>
<dbReference type="MINT" id="P61020"/>
<dbReference type="STRING" id="9606.ENSP00000353444"/>
<dbReference type="GlyGen" id="P61020">
    <property type="glycosylation" value="1 site, 1 O-linked glycan (1 site)"/>
</dbReference>
<dbReference type="iPTMnet" id="P61020"/>
<dbReference type="MetOSite" id="P61020"/>
<dbReference type="PhosphoSitePlus" id="P61020"/>
<dbReference type="SwissPalm" id="P61020"/>
<dbReference type="BioMuta" id="RAB5B"/>
<dbReference type="DMDM" id="46577637"/>
<dbReference type="jPOST" id="P61020"/>
<dbReference type="MassIVE" id="P61020"/>
<dbReference type="PaxDb" id="9606-ENSP00000353444"/>
<dbReference type="PeptideAtlas" id="P61020"/>
<dbReference type="PRIDE" id="P61020"/>
<dbReference type="ProteomicsDB" id="4453"/>
<dbReference type="ProteomicsDB" id="57253">
    <molecule id="P61020-1"/>
</dbReference>
<dbReference type="Pumba" id="P61020"/>
<dbReference type="Antibodypedia" id="4131">
    <property type="antibodies" value="176 antibodies from 33 providers"/>
</dbReference>
<dbReference type="DNASU" id="5869"/>
<dbReference type="Ensembl" id="ENST00000360299.10">
    <molecule id="P61020-1"/>
    <property type="protein sequence ID" value="ENSP00000353444.5"/>
    <property type="gene ID" value="ENSG00000111540.16"/>
</dbReference>
<dbReference type="Ensembl" id="ENST00000448789.2">
    <molecule id="P61020-2"/>
    <property type="protein sequence ID" value="ENSP00000391319.2"/>
    <property type="gene ID" value="ENSG00000111540.16"/>
</dbReference>
<dbReference type="Ensembl" id="ENST00000553116.5">
    <molecule id="P61020-1"/>
    <property type="protein sequence ID" value="ENSP00000450168.1"/>
    <property type="gene ID" value="ENSG00000111540.16"/>
</dbReference>
<dbReference type="GeneID" id="5869"/>
<dbReference type="KEGG" id="hsa:5869"/>
<dbReference type="MANE-Select" id="ENST00000360299.10">
    <property type="protein sequence ID" value="ENSP00000353444.5"/>
    <property type="RefSeq nucleotide sequence ID" value="NM_002868.4"/>
    <property type="RefSeq protein sequence ID" value="NP_002859.1"/>
</dbReference>
<dbReference type="UCSC" id="uc001siv.4">
    <molecule id="P61020-1"/>
    <property type="organism name" value="human"/>
</dbReference>
<dbReference type="AGR" id="HGNC:9784"/>
<dbReference type="CTD" id="5869"/>
<dbReference type="DisGeNET" id="5869"/>
<dbReference type="GeneCards" id="RAB5B"/>
<dbReference type="HGNC" id="HGNC:9784">
    <property type="gene designation" value="RAB5B"/>
</dbReference>
<dbReference type="HPA" id="ENSG00000111540">
    <property type="expression patterns" value="Low tissue specificity"/>
</dbReference>
<dbReference type="MIM" id="179514">
    <property type="type" value="gene"/>
</dbReference>
<dbReference type="neXtProt" id="NX_P61020"/>
<dbReference type="OpenTargets" id="ENSG00000111540"/>
<dbReference type="PharmGKB" id="PA34144"/>
<dbReference type="VEuPathDB" id="HostDB:ENSG00000111540"/>
<dbReference type="eggNOG" id="KOG0092">
    <property type="taxonomic scope" value="Eukaryota"/>
</dbReference>
<dbReference type="GeneTree" id="ENSGT00940000160756"/>
<dbReference type="HOGENOM" id="CLU_041217_10_2_1"/>
<dbReference type="InParanoid" id="P61020"/>
<dbReference type="OMA" id="DEEGLMW"/>
<dbReference type="OrthoDB" id="63533at2759"/>
<dbReference type="PAN-GO" id="P61020">
    <property type="GO annotations" value="8 GO annotations based on evolutionary models"/>
</dbReference>
<dbReference type="PhylomeDB" id="P61020"/>
<dbReference type="TreeFam" id="TF300199"/>
<dbReference type="PathwayCommons" id="P61020"/>
<dbReference type="Reactome" id="R-HSA-6798695">
    <property type="pathway name" value="Neutrophil degranulation"/>
</dbReference>
<dbReference type="Reactome" id="R-HSA-8854214">
    <property type="pathway name" value="TBC/RABGAPs"/>
</dbReference>
<dbReference type="Reactome" id="R-HSA-8856828">
    <property type="pathway name" value="Clathrin-mediated endocytosis"/>
</dbReference>
<dbReference type="Reactome" id="R-HSA-8873719">
    <property type="pathway name" value="RAB geranylgeranylation"/>
</dbReference>
<dbReference type="Reactome" id="R-HSA-8876198">
    <property type="pathway name" value="RAB GEFs exchange GTP for GDP on RABs"/>
</dbReference>
<dbReference type="Reactome" id="R-HSA-9820960">
    <property type="pathway name" value="Respiratory syncytial virus (RSV) attachment and entry"/>
</dbReference>
<dbReference type="SignaLink" id="P61020"/>
<dbReference type="SIGNOR" id="P61020"/>
<dbReference type="BioGRID-ORCS" id="5869">
    <property type="hits" value="13 hits in 1158 CRISPR screens"/>
</dbReference>
<dbReference type="CD-CODE" id="FB4E32DD">
    <property type="entry name" value="Presynaptic clusters and postsynaptic densities"/>
</dbReference>
<dbReference type="ChiTaRS" id="RAB5B">
    <property type="organism name" value="human"/>
</dbReference>
<dbReference type="EvolutionaryTrace" id="P61020"/>
<dbReference type="GeneWiki" id="RAB5B"/>
<dbReference type="GenomeRNAi" id="5869"/>
<dbReference type="Pharos" id="P61020">
    <property type="development level" value="Tbio"/>
</dbReference>
<dbReference type="PRO" id="PR:P61020"/>
<dbReference type="Proteomes" id="UP000005640">
    <property type="component" value="Chromosome 12"/>
</dbReference>
<dbReference type="RNAct" id="P61020">
    <property type="molecule type" value="protein"/>
</dbReference>
<dbReference type="Bgee" id="ENSG00000111540">
    <property type="expression patterns" value="Expressed in lower esophagus mucosa and 196 other cell types or tissues"/>
</dbReference>
<dbReference type="ExpressionAtlas" id="P61020">
    <property type="expression patterns" value="baseline and differential"/>
</dbReference>
<dbReference type="GO" id="GO:0005769">
    <property type="term" value="C:early endosome"/>
    <property type="evidence" value="ECO:0000318"/>
    <property type="project" value="GO_Central"/>
</dbReference>
<dbReference type="GO" id="GO:0031901">
    <property type="term" value="C:early endosome membrane"/>
    <property type="evidence" value="ECO:0000304"/>
    <property type="project" value="Reactome"/>
</dbReference>
<dbReference type="GO" id="GO:0030139">
    <property type="term" value="C:endocytic vesicle"/>
    <property type="evidence" value="ECO:0000318"/>
    <property type="project" value="GO_Central"/>
</dbReference>
<dbReference type="GO" id="GO:0012505">
    <property type="term" value="C:endomembrane system"/>
    <property type="evidence" value="ECO:0000318"/>
    <property type="project" value="GO_Central"/>
</dbReference>
<dbReference type="GO" id="GO:0005768">
    <property type="term" value="C:endosome"/>
    <property type="evidence" value="ECO:0000314"/>
    <property type="project" value="UniProtKB"/>
</dbReference>
<dbReference type="GO" id="GO:0070062">
    <property type="term" value="C:extracellular exosome"/>
    <property type="evidence" value="ECO:0000314"/>
    <property type="project" value="UniProtKB"/>
</dbReference>
<dbReference type="GO" id="GO:0043231">
    <property type="term" value="C:intracellular membrane-bounded organelle"/>
    <property type="evidence" value="ECO:0000314"/>
    <property type="project" value="HPA"/>
</dbReference>
<dbReference type="GO" id="GO:0042470">
    <property type="term" value="C:melanosome"/>
    <property type="evidence" value="ECO:0007669"/>
    <property type="project" value="UniProtKB-SubCell"/>
</dbReference>
<dbReference type="GO" id="GO:0016020">
    <property type="term" value="C:membrane"/>
    <property type="evidence" value="ECO:0000304"/>
    <property type="project" value="ProtInc"/>
</dbReference>
<dbReference type="GO" id="GO:0005886">
    <property type="term" value="C:plasma membrane"/>
    <property type="evidence" value="ECO:0000318"/>
    <property type="project" value="GO_Central"/>
</dbReference>
<dbReference type="GO" id="GO:0030667">
    <property type="term" value="C:secretory granule membrane"/>
    <property type="evidence" value="ECO:0000304"/>
    <property type="project" value="Reactome"/>
</dbReference>
<dbReference type="GO" id="GO:0030672">
    <property type="term" value="C:synaptic vesicle membrane"/>
    <property type="evidence" value="ECO:0007669"/>
    <property type="project" value="Ensembl"/>
</dbReference>
<dbReference type="GO" id="GO:0003925">
    <property type="term" value="F:G protein activity"/>
    <property type="evidence" value="ECO:0007669"/>
    <property type="project" value="UniProtKB-EC"/>
</dbReference>
<dbReference type="GO" id="GO:0019003">
    <property type="term" value="F:GDP binding"/>
    <property type="evidence" value="ECO:0000314"/>
    <property type="project" value="UniProtKB"/>
</dbReference>
<dbReference type="GO" id="GO:0005525">
    <property type="term" value="F:GTP binding"/>
    <property type="evidence" value="ECO:0007669"/>
    <property type="project" value="UniProtKB-KW"/>
</dbReference>
<dbReference type="GO" id="GO:0030742">
    <property type="term" value="F:GTP-dependent protein binding"/>
    <property type="evidence" value="ECO:0000314"/>
    <property type="project" value="UniProtKB"/>
</dbReference>
<dbReference type="GO" id="GO:0003924">
    <property type="term" value="F:GTPase activity"/>
    <property type="evidence" value="ECO:0000314"/>
    <property type="project" value="UniProtKB"/>
</dbReference>
<dbReference type="GO" id="GO:0019882">
    <property type="term" value="P:antigen processing and presentation"/>
    <property type="evidence" value="ECO:0000315"/>
    <property type="project" value="UniProtKB"/>
</dbReference>
<dbReference type="GO" id="GO:0006897">
    <property type="term" value="P:endocytosis"/>
    <property type="evidence" value="ECO:0000318"/>
    <property type="project" value="GO_Central"/>
</dbReference>
<dbReference type="GO" id="GO:0007032">
    <property type="term" value="P:endosome organization"/>
    <property type="evidence" value="ECO:0007669"/>
    <property type="project" value="Ensembl"/>
</dbReference>
<dbReference type="GO" id="GO:0006886">
    <property type="term" value="P:intracellular protein transport"/>
    <property type="evidence" value="ECO:0000318"/>
    <property type="project" value="GO_Central"/>
</dbReference>
<dbReference type="GO" id="GO:0048227">
    <property type="term" value="P:plasma membrane to endosome transport"/>
    <property type="evidence" value="ECO:0000315"/>
    <property type="project" value="UniProtKB"/>
</dbReference>
<dbReference type="GO" id="GO:0030100">
    <property type="term" value="P:regulation of endocytosis"/>
    <property type="evidence" value="ECO:0007669"/>
    <property type="project" value="Ensembl"/>
</dbReference>
<dbReference type="CDD" id="cd01860">
    <property type="entry name" value="Rab5_related"/>
    <property type="match status" value="1"/>
</dbReference>
<dbReference type="FunFam" id="3.40.50.300:FF:000180">
    <property type="entry name" value="Member RAS oncogene family"/>
    <property type="match status" value="1"/>
</dbReference>
<dbReference type="Gene3D" id="3.40.50.300">
    <property type="entry name" value="P-loop containing nucleotide triphosphate hydrolases"/>
    <property type="match status" value="1"/>
</dbReference>
<dbReference type="InterPro" id="IPR027417">
    <property type="entry name" value="P-loop_NTPase"/>
</dbReference>
<dbReference type="InterPro" id="IPR005225">
    <property type="entry name" value="Small_GTP-bd"/>
</dbReference>
<dbReference type="InterPro" id="IPR001806">
    <property type="entry name" value="Small_GTPase"/>
</dbReference>
<dbReference type="NCBIfam" id="TIGR00231">
    <property type="entry name" value="small_GTP"/>
    <property type="match status" value="1"/>
</dbReference>
<dbReference type="PANTHER" id="PTHR47978">
    <property type="match status" value="1"/>
</dbReference>
<dbReference type="Pfam" id="PF00071">
    <property type="entry name" value="Ras"/>
    <property type="match status" value="1"/>
</dbReference>
<dbReference type="PRINTS" id="PR00449">
    <property type="entry name" value="RASTRNSFRMNG"/>
</dbReference>
<dbReference type="SMART" id="SM00175">
    <property type="entry name" value="RAB"/>
    <property type="match status" value="1"/>
</dbReference>
<dbReference type="SMART" id="SM00176">
    <property type="entry name" value="RAN"/>
    <property type="match status" value="1"/>
</dbReference>
<dbReference type="SMART" id="SM00173">
    <property type="entry name" value="RAS"/>
    <property type="match status" value="1"/>
</dbReference>
<dbReference type="SMART" id="SM00174">
    <property type="entry name" value="RHO"/>
    <property type="match status" value="1"/>
</dbReference>
<dbReference type="SUPFAM" id="SSF52540">
    <property type="entry name" value="P-loop containing nucleoside triphosphate hydrolases"/>
    <property type="match status" value="1"/>
</dbReference>
<dbReference type="PROSITE" id="PS51419">
    <property type="entry name" value="RAB"/>
    <property type="match status" value="1"/>
</dbReference>
<sequence length="215" mass="23707">MTSRSTARPNGQPQASKICQFKLVLLGESAVGKSSLVLRFVKGQFHEYQESTIGAAFLTQSVCLDDTTVKFEIWDTAGQERYHSLAPMYYRGAQAAIVVYDITNQETFARAKTWVKELQRQASPSIVIALAGNKADLANKRMVEYEEAQAYADDNSLLFMETSAKTAMNVNDLFLAIAKKLPKSEPQNLGGAAGRSRGVDLHEQSQQNKSQCCSN</sequence>
<gene>
    <name evidence="10" type="primary">RAB5B</name>
</gene>
<evidence type="ECO:0000250" key="1">
    <source>
        <dbReference type="UniProtKB" id="P20339"/>
    </source>
</evidence>
<evidence type="ECO:0000256" key="2">
    <source>
        <dbReference type="SAM" id="MobiDB-lite"/>
    </source>
</evidence>
<evidence type="ECO:0000269" key="3">
    <source>
    </source>
</evidence>
<evidence type="ECO:0000269" key="4">
    <source>
    </source>
</evidence>
<evidence type="ECO:0000269" key="5">
    <source>
    </source>
</evidence>
<evidence type="ECO:0000269" key="6">
    <source>
    </source>
</evidence>
<evidence type="ECO:0000269" key="7">
    <source>
    </source>
</evidence>
<evidence type="ECO:0000303" key="8">
    <source>
    </source>
</evidence>
<evidence type="ECO:0000305" key="9"/>
<evidence type="ECO:0000312" key="10">
    <source>
        <dbReference type="HGNC" id="HGNC:9784"/>
    </source>
</evidence>
<evidence type="ECO:0007744" key="11">
    <source>
        <dbReference type="PDB" id="2HEI"/>
    </source>
</evidence>
<evidence type="ECO:0007744" key="12">
    <source>
    </source>
</evidence>
<evidence type="ECO:0007829" key="13">
    <source>
        <dbReference type="PDB" id="2HEI"/>
    </source>
</evidence>